<keyword id="KW-0002">3D-structure</keyword>
<keyword id="KW-0025">Alternative splicing</keyword>
<keyword id="KW-0378">Hydrolase</keyword>
<keyword id="KW-1017">Isopeptide bond</keyword>
<keyword id="KW-0458">Lysosome</keyword>
<keyword id="KW-0472">Membrane</keyword>
<keyword id="KW-0523">Neurodegeneration</keyword>
<keyword id="KW-0539">Nucleus</keyword>
<keyword id="KW-0597">Phosphoprotein</keyword>
<keyword id="KW-0645">Protease</keyword>
<keyword id="KW-1267">Proteomics identification</keyword>
<keyword id="KW-1185">Reference proteome</keyword>
<keyword id="KW-0677">Repeat</keyword>
<keyword id="KW-0950">Spinocerebellar ataxia</keyword>
<keyword id="KW-0788">Thiol protease</keyword>
<keyword id="KW-0804">Transcription</keyword>
<keyword id="KW-0805">Transcription regulation</keyword>
<keyword id="KW-0818">Triplet repeat expansion</keyword>
<keyword id="KW-0832">Ubl conjugation</keyword>
<keyword id="KW-0833">Ubl conjugation pathway</keyword>
<sequence length="361" mass="41250">MESIFHEKQEGSLCAQHCLNNLLQGEYFSPVELSSIAHQLDEEERMRMAEGGVTSEDYRTFLQQPSGNMDDSGFFSIQVISNALKVWGLELILFNSPEYQRLRIDPINERSFICNYKEHWFTVRKLGKQWFNLNSLLTGPELISDTYLALFLAQLQQEGYSIFVVKGDLPDCEADQLLQMIRVQQMHRPKLIGEELAQLKEQRVHKTDLERVLEANDGSGMLDEDEEDLQRALALSRQEIDMEDEEADLRRAIQLSMQGSSRNISQDMTQTSGTNLTSEELRKRREAYFEKQQQKQQQQQQQQQQGDLSGQSSHPCERPATSSGALGSDLGDAMSEEDMLQAAVTMSLETVRNDLKTEGKK</sequence>
<dbReference type="EC" id="3.4.19.12" evidence="10 15"/>
<dbReference type="EMBL" id="S75313">
    <property type="protein sequence ID" value="AAB33571.1"/>
    <property type="molecule type" value="mRNA"/>
</dbReference>
<dbReference type="EMBL" id="U64820">
    <property type="protein sequence ID" value="AAB63352.1"/>
    <property type="molecule type" value="mRNA"/>
</dbReference>
<dbReference type="EMBL" id="U64821">
    <property type="protein sequence ID" value="AAB63353.1"/>
    <property type="molecule type" value="mRNA"/>
</dbReference>
<dbReference type="EMBL" id="U64822">
    <property type="protein sequence ID" value="AAB63354.1"/>
    <property type="molecule type" value="mRNA"/>
</dbReference>
<dbReference type="EMBL" id="AB050194">
    <property type="protein sequence ID" value="BAB18798.1"/>
    <property type="molecule type" value="mRNA"/>
</dbReference>
<dbReference type="EMBL" id="AB038653">
    <property type="protein sequence ID" value="BAB55645.1"/>
    <property type="molecule type" value="Genomic_DNA"/>
</dbReference>
<dbReference type="EMBL" id="AB038653">
    <property type="protein sequence ID" value="BAB55646.1"/>
    <property type="molecule type" value="Genomic_DNA"/>
</dbReference>
<dbReference type="EMBL" id="EU009923">
    <property type="protein sequence ID" value="ABS29269.1"/>
    <property type="molecule type" value="Genomic_DNA"/>
</dbReference>
<dbReference type="EMBL" id="AL049872">
    <property type="status" value="NOT_ANNOTATED_CDS"/>
    <property type="molecule type" value="Genomic_DNA"/>
</dbReference>
<dbReference type="EMBL" id="AL121773">
    <property type="status" value="NOT_ANNOTATED_CDS"/>
    <property type="molecule type" value="Genomic_DNA"/>
</dbReference>
<dbReference type="EMBL" id="CH471061">
    <property type="protein sequence ID" value="EAW81472.1"/>
    <property type="molecule type" value="Genomic_DNA"/>
</dbReference>
<dbReference type="EMBL" id="BC033711">
    <property type="protein sequence ID" value="AAH33711.1"/>
    <property type="molecule type" value="mRNA"/>
</dbReference>
<dbReference type="CCDS" id="CCDS32143.1">
    <molecule id="P54252-3"/>
</dbReference>
<dbReference type="CCDS" id="CCDS45154.1">
    <molecule id="P54252-4"/>
</dbReference>
<dbReference type="CCDS" id="CCDS53908.1">
    <molecule id="P54252-5"/>
</dbReference>
<dbReference type="CCDS" id="CCDS9900.1">
    <molecule id="P54252-2"/>
</dbReference>
<dbReference type="PIR" id="S50830">
    <property type="entry name" value="S50830"/>
</dbReference>
<dbReference type="RefSeq" id="NP_001121168.1">
    <molecule id="P54252-4"/>
    <property type="nucleotide sequence ID" value="NM_001127696.2"/>
</dbReference>
<dbReference type="RefSeq" id="NP_001158252.1">
    <molecule id="P54252-5"/>
    <property type="nucleotide sequence ID" value="NM_001164780.2"/>
</dbReference>
<dbReference type="RefSeq" id="NP_004984.2">
    <molecule id="P54252-2"/>
    <property type="nucleotide sequence ID" value="NM_004993.5"/>
</dbReference>
<dbReference type="RefSeq" id="NP_109376.1">
    <molecule id="P54252-3"/>
    <property type="nucleotide sequence ID" value="NM_030660.5"/>
</dbReference>
<dbReference type="PDB" id="1YZB">
    <property type="method" value="NMR"/>
    <property type="chains" value="A=1-182"/>
</dbReference>
<dbReference type="PDB" id="2AGA">
    <property type="method" value="NMR"/>
    <property type="chains" value="A=1-185"/>
</dbReference>
<dbReference type="PDB" id="2DOS">
    <property type="method" value="NMR"/>
    <property type="chains" value="A=1-171"/>
</dbReference>
<dbReference type="PDB" id="2JRI">
    <property type="method" value="NMR"/>
    <property type="chains" value="A=1-182"/>
</dbReference>
<dbReference type="PDB" id="2KLZ">
    <property type="method" value="NMR"/>
    <property type="chains" value="A=222-263"/>
</dbReference>
<dbReference type="PDB" id="4WTH">
    <property type="method" value="X-ray"/>
    <property type="resolution" value="2.25 A"/>
    <property type="chains" value="A/B=278-324"/>
</dbReference>
<dbReference type="PDB" id="4YS9">
    <property type="method" value="X-ray"/>
    <property type="resolution" value="2.00 A"/>
    <property type="chains" value="B=278-324"/>
</dbReference>
<dbReference type="PDBsum" id="1YZB"/>
<dbReference type="PDBsum" id="2AGA"/>
<dbReference type="PDBsum" id="2DOS"/>
<dbReference type="PDBsum" id="2JRI"/>
<dbReference type="PDBsum" id="2KLZ"/>
<dbReference type="PDBsum" id="4WTH"/>
<dbReference type="PDBsum" id="4YS9"/>
<dbReference type="BMRB" id="P54252"/>
<dbReference type="SASBDB" id="P54252"/>
<dbReference type="SMR" id="P54252"/>
<dbReference type="BioGRID" id="110433">
    <property type="interactions" value="453"/>
</dbReference>
<dbReference type="CORUM" id="P54252"/>
<dbReference type="ELM" id="P54252"/>
<dbReference type="FunCoup" id="P54252">
    <property type="interactions" value="4067"/>
</dbReference>
<dbReference type="IntAct" id="P54252">
    <property type="interactions" value="140"/>
</dbReference>
<dbReference type="MINT" id="P54252"/>
<dbReference type="STRING" id="9606.ENSP00000496695"/>
<dbReference type="BindingDB" id="P54252"/>
<dbReference type="ChEMBL" id="CHEMBL4523240"/>
<dbReference type="MEROPS" id="C86.001"/>
<dbReference type="GlyGen" id="P54252">
    <property type="glycosylation" value="1 site, 1 O-linked glycan (1 site)"/>
</dbReference>
<dbReference type="iPTMnet" id="P54252"/>
<dbReference type="MetOSite" id="P54252"/>
<dbReference type="PhosphoSitePlus" id="P54252"/>
<dbReference type="BioMuta" id="ATXN3"/>
<dbReference type="DMDM" id="290457685"/>
<dbReference type="jPOST" id="P54252"/>
<dbReference type="MassIVE" id="P54252"/>
<dbReference type="PaxDb" id="9606-ENSP00000478320"/>
<dbReference type="PeptideAtlas" id="P54252"/>
<dbReference type="ProteomicsDB" id="14137"/>
<dbReference type="ProteomicsDB" id="19154"/>
<dbReference type="ProteomicsDB" id="56655">
    <molecule id="P54252-1"/>
</dbReference>
<dbReference type="ProteomicsDB" id="56656">
    <molecule id="P54252-2"/>
</dbReference>
<dbReference type="ProteomicsDB" id="56657">
    <molecule id="P54252-3"/>
</dbReference>
<dbReference type="Pumba" id="P54252"/>
<dbReference type="Antibodypedia" id="13668">
    <property type="antibodies" value="327 antibodies from 32 providers"/>
</dbReference>
<dbReference type="DNASU" id="4287"/>
<dbReference type="Ensembl" id="ENST00000340660.10">
    <molecule id="P54252-3"/>
    <property type="protein sequence ID" value="ENSP00000339110.6"/>
    <property type="gene ID" value="ENSG00000066427.25"/>
</dbReference>
<dbReference type="Ensembl" id="ENST00000502250.5">
    <molecule id="P54252-5"/>
    <property type="protein sequence ID" value="ENSP00000425322.1"/>
    <property type="gene ID" value="ENSG00000066427.25"/>
</dbReference>
<dbReference type="Ensembl" id="ENST00000503767.5">
    <molecule id="P54252-4"/>
    <property type="protein sequence ID" value="ENSP00000426697.1"/>
    <property type="gene ID" value="ENSG00000066427.25"/>
</dbReference>
<dbReference type="Ensembl" id="ENST00000532032.5">
    <molecule id="P54252-1"/>
    <property type="protein sequence ID" value="ENSP00000437157.1"/>
    <property type="gene ID" value="ENSG00000066427.25"/>
</dbReference>
<dbReference type="Ensembl" id="ENST00000644486.2">
    <molecule id="P54252-2"/>
    <property type="protein sequence ID" value="ENSP00000496695.1"/>
    <property type="gene ID" value="ENSG00000066427.25"/>
</dbReference>
<dbReference type="GeneID" id="4287"/>
<dbReference type="KEGG" id="hsa:4287"/>
<dbReference type="MANE-Select" id="ENST00000644486.2">
    <property type="protein sequence ID" value="ENSP00000496695.1"/>
    <property type="RefSeq nucleotide sequence ID" value="NM_004993.6"/>
    <property type="RefSeq protein sequence ID" value="NP_004984.2"/>
</dbReference>
<dbReference type="UCSC" id="uc001yac.5">
    <molecule id="P54252-2"/>
    <property type="organism name" value="human"/>
</dbReference>
<dbReference type="AGR" id="HGNC:7106"/>
<dbReference type="CTD" id="4287"/>
<dbReference type="DisGeNET" id="4287"/>
<dbReference type="GeneCards" id="ATXN3"/>
<dbReference type="GeneReviews" id="ATXN3"/>
<dbReference type="HGNC" id="HGNC:7106">
    <property type="gene designation" value="ATXN3"/>
</dbReference>
<dbReference type="HPA" id="ENSG00000066427">
    <property type="expression patterns" value="Low tissue specificity"/>
</dbReference>
<dbReference type="MalaCards" id="ATXN3"/>
<dbReference type="MIM" id="109150">
    <property type="type" value="phenotype"/>
</dbReference>
<dbReference type="MIM" id="607047">
    <property type="type" value="gene"/>
</dbReference>
<dbReference type="neXtProt" id="NX_P54252"/>
<dbReference type="OpenTargets" id="ENSG00000066427"/>
<dbReference type="Orphanet" id="276238">
    <property type="disease" value="Machado-Joseph disease type 1"/>
</dbReference>
<dbReference type="Orphanet" id="276241">
    <property type="disease" value="Machado-Joseph disease type 2"/>
</dbReference>
<dbReference type="Orphanet" id="276244">
    <property type="disease" value="Machado-Joseph disease type 3"/>
</dbReference>
<dbReference type="PharmGKB" id="PA134971833"/>
<dbReference type="VEuPathDB" id="HostDB:ENSG00000066427"/>
<dbReference type="eggNOG" id="KOG2935">
    <property type="taxonomic scope" value="Eukaryota"/>
</dbReference>
<dbReference type="GeneTree" id="ENSGT00390000001830"/>
<dbReference type="InParanoid" id="P54252"/>
<dbReference type="OMA" id="LGQAYIC"/>
<dbReference type="OrthoDB" id="10063692at2759"/>
<dbReference type="PAN-GO" id="P54252">
    <property type="GO annotations" value="3 GO annotations based on evolutionary models"/>
</dbReference>
<dbReference type="PhylomeDB" id="P54252"/>
<dbReference type="TreeFam" id="TF314228"/>
<dbReference type="PathwayCommons" id="P54252"/>
<dbReference type="Reactome" id="R-HSA-5689877">
    <property type="pathway name" value="Josephin domain DUBs"/>
</dbReference>
<dbReference type="Reactome" id="R-HSA-9615017">
    <property type="pathway name" value="FOXO-mediated transcription of oxidative stress, metabolic and neuronal genes"/>
</dbReference>
<dbReference type="SignaLink" id="P54252"/>
<dbReference type="SIGNOR" id="P54252"/>
<dbReference type="BioGRID-ORCS" id="4287">
    <property type="hits" value="10 hits in 1195 CRISPR screens"/>
</dbReference>
<dbReference type="ChiTaRS" id="ATXN3">
    <property type="organism name" value="human"/>
</dbReference>
<dbReference type="EvolutionaryTrace" id="P54252"/>
<dbReference type="GeneWiki" id="Ataxin_3"/>
<dbReference type="GenomeRNAi" id="4287"/>
<dbReference type="Pharos" id="P54252">
    <property type="development level" value="Tbio"/>
</dbReference>
<dbReference type="PRO" id="PR:P54252"/>
<dbReference type="Proteomes" id="UP000005640">
    <property type="component" value="Chromosome 14"/>
</dbReference>
<dbReference type="RNAct" id="P54252">
    <property type="molecule type" value="protein"/>
</dbReference>
<dbReference type="Bgee" id="ENSG00000066427">
    <property type="expression patterns" value="Expressed in calcaneal tendon and 187 other cell types or tissues"/>
</dbReference>
<dbReference type="ExpressionAtlas" id="P54252">
    <property type="expression patterns" value="baseline and differential"/>
</dbReference>
<dbReference type="GO" id="GO:0005737">
    <property type="term" value="C:cytoplasm"/>
    <property type="evidence" value="ECO:0000304"/>
    <property type="project" value="ProtInc"/>
</dbReference>
<dbReference type="GO" id="GO:0005829">
    <property type="term" value="C:cytosol"/>
    <property type="evidence" value="ECO:0000314"/>
    <property type="project" value="ParkinsonsUK-UCL"/>
</dbReference>
<dbReference type="GO" id="GO:0005765">
    <property type="term" value="C:lysosomal membrane"/>
    <property type="evidence" value="ECO:0000314"/>
    <property type="project" value="UniProtKB"/>
</dbReference>
<dbReference type="GO" id="GO:0005759">
    <property type="term" value="C:mitochondrial matrix"/>
    <property type="evidence" value="ECO:0000250"/>
    <property type="project" value="ParkinsonsUK-UCL"/>
</dbReference>
<dbReference type="GO" id="GO:0031966">
    <property type="term" value="C:mitochondrial membrane"/>
    <property type="evidence" value="ECO:0000250"/>
    <property type="project" value="ParkinsonsUK-UCL"/>
</dbReference>
<dbReference type="GO" id="GO:0042405">
    <property type="term" value="C:nuclear inclusion body"/>
    <property type="evidence" value="ECO:0000250"/>
    <property type="project" value="ParkinsonsUK-UCL"/>
</dbReference>
<dbReference type="GO" id="GO:0016363">
    <property type="term" value="C:nuclear matrix"/>
    <property type="evidence" value="ECO:0007669"/>
    <property type="project" value="UniProtKB-SubCell"/>
</dbReference>
<dbReference type="GO" id="GO:0005730">
    <property type="term" value="C:nucleolus"/>
    <property type="evidence" value="ECO:0000314"/>
    <property type="project" value="HPA"/>
</dbReference>
<dbReference type="GO" id="GO:0005654">
    <property type="term" value="C:nucleoplasm"/>
    <property type="evidence" value="ECO:0000314"/>
    <property type="project" value="HPA"/>
</dbReference>
<dbReference type="GO" id="GO:0005634">
    <property type="term" value="C:nucleus"/>
    <property type="evidence" value="ECO:0000314"/>
    <property type="project" value="ParkinsonsUK-UCL"/>
</dbReference>
<dbReference type="GO" id="GO:0005886">
    <property type="term" value="C:plasma membrane"/>
    <property type="evidence" value="ECO:0000314"/>
    <property type="project" value="HPA"/>
</dbReference>
<dbReference type="GO" id="GO:0045202">
    <property type="term" value="C:synapse"/>
    <property type="evidence" value="ECO:0007669"/>
    <property type="project" value="GOC"/>
</dbReference>
<dbReference type="GO" id="GO:0051117">
    <property type="term" value="F:ATPase binding"/>
    <property type="evidence" value="ECO:0000353"/>
    <property type="project" value="ParkinsonsUK-UCL"/>
</dbReference>
<dbReference type="GO" id="GO:0004843">
    <property type="term" value="F:cysteine-type deubiquitinase activity"/>
    <property type="evidence" value="ECO:0000314"/>
    <property type="project" value="UniProtKB"/>
</dbReference>
<dbReference type="GO" id="GO:0042802">
    <property type="term" value="F:identical protein binding"/>
    <property type="evidence" value="ECO:0000353"/>
    <property type="project" value="IntAct"/>
</dbReference>
<dbReference type="GO" id="GO:1990380">
    <property type="term" value="F:K48-linked deubiquitinase activity"/>
    <property type="evidence" value="ECO:0000314"/>
    <property type="project" value="ParkinsonsUK-UCL"/>
</dbReference>
<dbReference type="GO" id="GO:0061578">
    <property type="term" value="F:K63-linked deubiquitinase activity"/>
    <property type="evidence" value="ECO:0000314"/>
    <property type="project" value="ParkinsonsUK-UCL"/>
</dbReference>
<dbReference type="GO" id="GO:0031625">
    <property type="term" value="F:ubiquitin protein ligase binding"/>
    <property type="evidence" value="ECO:0000353"/>
    <property type="project" value="ParkinsonsUK-UCL"/>
</dbReference>
<dbReference type="GO" id="GO:0030036">
    <property type="term" value="P:actin cytoskeleton organization"/>
    <property type="evidence" value="ECO:0000315"/>
    <property type="project" value="MGI"/>
</dbReference>
<dbReference type="GO" id="GO:0034198">
    <property type="term" value="P:cellular response to amino acid starvation"/>
    <property type="evidence" value="ECO:0000314"/>
    <property type="project" value="UniProtKB"/>
</dbReference>
<dbReference type="GO" id="GO:0034605">
    <property type="term" value="P:cellular response to heat"/>
    <property type="evidence" value="ECO:0000250"/>
    <property type="project" value="ParkinsonsUK-UCL"/>
</dbReference>
<dbReference type="GO" id="GO:0071218">
    <property type="term" value="P:cellular response to misfolded protein"/>
    <property type="evidence" value="ECO:0000250"/>
    <property type="project" value="UniProtKB"/>
</dbReference>
<dbReference type="GO" id="GO:0007268">
    <property type="term" value="P:chemical synaptic transmission"/>
    <property type="evidence" value="ECO:0000304"/>
    <property type="project" value="ProtInc"/>
</dbReference>
<dbReference type="GO" id="GO:0035640">
    <property type="term" value="P:exploration behavior"/>
    <property type="evidence" value="ECO:0007669"/>
    <property type="project" value="Ensembl"/>
</dbReference>
<dbReference type="GO" id="GO:0045104">
    <property type="term" value="P:intermediate filament cytoskeleton organization"/>
    <property type="evidence" value="ECO:0000315"/>
    <property type="project" value="MGI"/>
</dbReference>
<dbReference type="GO" id="GO:0000226">
    <property type="term" value="P:microtubule cytoskeleton organization"/>
    <property type="evidence" value="ECO:0000315"/>
    <property type="project" value="MGI"/>
</dbReference>
<dbReference type="GO" id="GO:0035520">
    <property type="term" value="P:monoubiquitinated protein deubiquitination"/>
    <property type="evidence" value="ECO:0000250"/>
    <property type="project" value="UniProtKB"/>
</dbReference>
<dbReference type="GO" id="GO:1904262">
    <property type="term" value="P:negative regulation of TORC1 signaling"/>
    <property type="evidence" value="ECO:0000314"/>
    <property type="project" value="UniProtKB"/>
</dbReference>
<dbReference type="GO" id="GO:0007399">
    <property type="term" value="P:nervous system development"/>
    <property type="evidence" value="ECO:0000304"/>
    <property type="project" value="ProtInc"/>
</dbReference>
<dbReference type="GO" id="GO:0006289">
    <property type="term" value="P:nucleotide-excision repair"/>
    <property type="evidence" value="ECO:0000304"/>
    <property type="project" value="ProtInc"/>
</dbReference>
<dbReference type="GO" id="GO:1904294">
    <property type="term" value="P:positive regulation of ERAD pathway"/>
    <property type="evidence" value="ECO:0000315"/>
    <property type="project" value="ParkinsonsUK-UCL"/>
</dbReference>
<dbReference type="GO" id="GO:2000060">
    <property type="term" value="P:positive regulation of ubiquitin-dependent protein catabolic process"/>
    <property type="evidence" value="ECO:0000314"/>
    <property type="project" value="ParkinsonsUK-UCL"/>
</dbReference>
<dbReference type="GO" id="GO:0043161">
    <property type="term" value="P:proteasome-mediated ubiquitin-dependent protein catabolic process"/>
    <property type="evidence" value="ECO:0000250"/>
    <property type="project" value="UniProtKB"/>
</dbReference>
<dbReference type="GO" id="GO:0016579">
    <property type="term" value="P:protein deubiquitination"/>
    <property type="evidence" value="ECO:0000304"/>
    <property type="project" value="Reactome"/>
</dbReference>
<dbReference type="GO" id="GO:0071108">
    <property type="term" value="P:protein K48-linked deubiquitination"/>
    <property type="evidence" value="ECO:0000314"/>
    <property type="project" value="ParkinsonsUK-UCL"/>
</dbReference>
<dbReference type="GO" id="GO:0070536">
    <property type="term" value="P:protein K63-linked deubiquitination"/>
    <property type="evidence" value="ECO:0000314"/>
    <property type="project" value="ParkinsonsUK-UCL"/>
</dbReference>
<dbReference type="GO" id="GO:1904327">
    <property type="term" value="P:protein localization to cytosolic proteasome complex"/>
    <property type="evidence" value="ECO:0000315"/>
    <property type="project" value="ParkinsonsUK-UCL"/>
</dbReference>
<dbReference type="GO" id="GO:0006515">
    <property type="term" value="P:protein quality control for misfolded or incompletely synthesized proteins"/>
    <property type="evidence" value="ECO:0000250"/>
    <property type="project" value="UniProtKB"/>
</dbReference>
<dbReference type="GO" id="GO:0010810">
    <property type="term" value="P:regulation of cell-substrate adhesion"/>
    <property type="evidence" value="ECO:0000315"/>
    <property type="project" value="MGI"/>
</dbReference>
<dbReference type="GO" id="GO:0006511">
    <property type="term" value="P:ubiquitin-dependent protein catabolic process"/>
    <property type="evidence" value="ECO:0000250"/>
    <property type="project" value="ParkinsonsUK-UCL"/>
</dbReference>
<dbReference type="DisProt" id="DP00576"/>
<dbReference type="FunFam" id="3.90.70.40:FF:000005">
    <property type="entry name" value="Ataxin 3"/>
    <property type="match status" value="1"/>
</dbReference>
<dbReference type="FunFam" id="1.10.287.10:FF:000005">
    <property type="entry name" value="ataxin-3 isoform X1"/>
    <property type="match status" value="1"/>
</dbReference>
<dbReference type="Gene3D" id="3.90.70.40">
    <property type="match status" value="1"/>
</dbReference>
<dbReference type="Gene3D" id="1.10.287.10">
    <property type="entry name" value="S15/NS1, RNA-binding"/>
    <property type="match status" value="1"/>
</dbReference>
<dbReference type="InterPro" id="IPR033865">
    <property type="entry name" value="Ataxin-3"/>
</dbReference>
<dbReference type="InterPro" id="IPR006155">
    <property type="entry name" value="Josephin"/>
</dbReference>
<dbReference type="InterPro" id="IPR003903">
    <property type="entry name" value="UIM_dom"/>
</dbReference>
<dbReference type="PANTHER" id="PTHR14159">
    <property type="entry name" value="ATAXIN-3-RELATED"/>
    <property type="match status" value="1"/>
</dbReference>
<dbReference type="PANTHER" id="PTHR14159:SF0">
    <property type="entry name" value="ATAXIN-3-RELATED"/>
    <property type="match status" value="1"/>
</dbReference>
<dbReference type="Pfam" id="PF02099">
    <property type="entry name" value="Josephin"/>
    <property type="match status" value="1"/>
</dbReference>
<dbReference type="Pfam" id="PF16619">
    <property type="entry name" value="SUIM_assoc"/>
    <property type="match status" value="1"/>
</dbReference>
<dbReference type="Pfam" id="PF02809">
    <property type="entry name" value="UIM"/>
    <property type="match status" value="3"/>
</dbReference>
<dbReference type="PRINTS" id="PR01233">
    <property type="entry name" value="JOSEPHIN"/>
</dbReference>
<dbReference type="SMART" id="SM01246">
    <property type="entry name" value="Josephin"/>
    <property type="match status" value="1"/>
</dbReference>
<dbReference type="SMART" id="SM00726">
    <property type="entry name" value="UIM"/>
    <property type="match status" value="3"/>
</dbReference>
<dbReference type="PROSITE" id="PS50957">
    <property type="entry name" value="JOSEPHIN"/>
    <property type="match status" value="1"/>
</dbReference>
<dbReference type="PROSITE" id="PS50330">
    <property type="entry name" value="UIM"/>
    <property type="match status" value="3"/>
</dbReference>
<accession>P54252</accession>
<accession>A7LFZ5</accession>
<accession>D6RDL9</accession>
<accession>E9PB63</accession>
<accession>O15284</accession>
<accession>O15285</accession>
<accession>O15286</accession>
<accession>Q8N189</accession>
<accession>Q96TC3</accession>
<accession>Q96TC4</accession>
<accession>Q9H3N0</accession>
<comment type="function">
    <text evidence="1 6 9 10 11 13 15">Deubiquitinating enzyme involved in protein homeostasis maintenance, transcription, cytoskeleton regulation, myogenesis and degradation of misfolded chaperone substrates (PubMed:12297501, PubMed:16118278, PubMed:17696782, PubMed:23625928, PubMed:28445460, PubMed:33157014). Binds long polyubiquitin chains and trims them, while it has weak or no activity against chains of 4 or less ubiquitins (PubMed:17696782). Involved in degradation of misfolded chaperone substrates via its interaction with STUB1/CHIP: recruited to monoubiquitinated STUB1/CHIP, and restricts the length of ubiquitin chain attached to STUB1/CHIP substrates and preventing further chain extension (By similarity). Interacts with key regulators of transcription and represses transcription: acts as a histone-binding protein that regulates transcription (PubMed:12297501). Acts as a negative regulator of mTORC1 signaling in response to amino acid deprivation by mediating deubiquitination of RHEB, thereby promoting RHEB inactivation by the TSC-TBC complex (PubMed:33157014). Regulates autophagy via the deubiquitination of 'Lys-402' of BECN1 leading to the stabilization of BECN1 (PubMed:28445460).</text>
</comment>
<comment type="catalytic activity">
    <reaction evidence="10 15">
        <text>Thiol-dependent hydrolysis of ester, thioester, amide, peptide and isopeptide bonds formed by the C-terminal Gly of ubiquitin (a 76-residue protein attached to proteins as an intracellular targeting signal).</text>
        <dbReference type="EC" id="3.4.19.12"/>
    </reaction>
</comment>
<comment type="subunit">
    <text evidence="1 8 13 14">Interacts with STUB1/CHIP (when monoubiquitinated) (By similarity). Interacts with DNA repair proteins RAD23A and RAD23B (PubMed:16020535, PubMed:30455355). Interacts with BECN1 (via its poly-Gln domain) (PubMed:28445460). Interacts with PRKN, UBR2, VCP and tubulin. Short isoform 1 interacts with CASP7 (PubMed:30455355).</text>
</comment>
<comment type="interaction">
    <interactant intactId="EBI-946046">
        <id>P54252</id>
    </interactant>
    <interactant intactId="EBI-10308705">
        <id>Q9H7C9</id>
        <label>AAMDC</label>
    </interactant>
    <organismsDiffer>false</organismsDiffer>
    <experiments>3</experiments>
</comment>
<comment type="interaction">
    <interactant intactId="EBI-946046">
        <id>P54252</id>
    </interactant>
    <interactant intactId="EBI-22011868">
        <id>Q6PCB6</id>
        <label>ABHD17C</label>
    </interactant>
    <organismsDiffer>false</organismsDiffer>
    <experiments>3</experiments>
</comment>
<comment type="interaction">
    <interactant intactId="EBI-946046">
        <id>P54252</id>
    </interactant>
    <interactant intactId="EBI-10173507">
        <id>Q6UY14-3</id>
        <label>ADAMTSL4</label>
    </interactant>
    <organismsDiffer>false</organismsDiffer>
    <experiments>3</experiments>
</comment>
<comment type="interaction">
    <interactant intactId="EBI-946046">
        <id>P54252</id>
    </interactant>
    <interactant intactId="EBI-748855">
        <id>O43488</id>
        <label>AKR7A2</label>
    </interactant>
    <organismsDiffer>false</organismsDiffer>
    <experiments>3</experiments>
</comment>
<comment type="interaction">
    <interactant intactId="EBI-946046">
        <id>P54252</id>
    </interactant>
    <interactant intactId="EBI-2875816">
        <id>Q9NP61</id>
        <label>ARFGAP3</label>
    </interactant>
    <organismsDiffer>false</organismsDiffer>
    <experiments>3</experiments>
</comment>
<comment type="interaction">
    <interactant intactId="EBI-946046">
        <id>P54252</id>
    </interactant>
    <interactant intactId="EBI-954525">
        <id>Q14CB8</id>
        <label>ARHGAP19</label>
    </interactant>
    <organismsDiffer>false</organismsDiffer>
    <experiments>4</experiments>
</comment>
<comment type="interaction">
    <interactant intactId="EBI-946046">
        <id>P54252</id>
    </interactant>
    <interactant intactId="EBI-14199987">
        <id>Q9Y575-3</id>
        <label>ASB3</label>
    </interactant>
    <organismsDiffer>false</organismsDiffer>
    <experiments>3</experiments>
</comment>
<comment type="interaction">
    <interactant intactId="EBI-946046">
        <id>P54252</id>
    </interactant>
    <interactant intactId="EBI-9089489">
        <id>Q96FT7-4</id>
        <label>ASIC4</label>
    </interactant>
    <organismsDiffer>false</organismsDiffer>
    <experiments>3</experiments>
</comment>
<comment type="interaction">
    <interactant intactId="EBI-946046">
        <id>P54252</id>
    </interactant>
    <interactant intactId="EBI-7936069">
        <id>P06276</id>
        <label>BCHE</label>
    </interactant>
    <organismsDiffer>false</organismsDiffer>
    <experiments>3</experiments>
</comment>
<comment type="interaction">
    <interactant intactId="EBI-946046">
        <id>P54252</id>
    </interactant>
    <interactant intactId="EBI-10178113">
        <id>Q96G97-4</id>
        <label>BSCL2</label>
    </interactant>
    <organismsDiffer>false</organismsDiffer>
    <experiments>3</experiments>
</comment>
<comment type="interaction">
    <interactant intactId="EBI-946046">
        <id>P54252</id>
    </interactant>
    <interactant intactId="EBI-18041102">
        <id>Q6UWD8</id>
        <label>C16orf54</label>
    </interactant>
    <organismsDiffer>false</organismsDiffer>
    <experiments>3</experiments>
</comment>
<comment type="interaction">
    <interactant intactId="EBI-946046">
        <id>P54252</id>
    </interactant>
    <interactant intactId="EBI-12248206">
        <id>P29466-3</id>
        <label>CASP1</label>
    </interactant>
    <organismsDiffer>false</organismsDiffer>
    <experiments>9</experiments>
</comment>
<comment type="interaction">
    <interactant intactId="EBI-946046">
        <id>P54252</id>
    </interactant>
    <interactant intactId="EBI-524064">
        <id>P42574</id>
        <label>CASP3</label>
    </interactant>
    <organismsDiffer>false</organismsDiffer>
    <experiments>9</experiments>
</comment>
<comment type="interaction">
    <interactant intactId="EBI-946046">
        <id>P54252</id>
    </interactant>
    <interactant intactId="EBI-12165781">
        <id>Q96LX7-5</id>
        <label>CCDC17</label>
    </interactant>
    <organismsDiffer>false</organismsDiffer>
    <experiments>3</experiments>
</comment>
<comment type="interaction">
    <interactant intactId="EBI-946046">
        <id>P54252</id>
    </interactant>
    <interactant intactId="EBI-356687">
        <id>P40227</id>
        <label>CCT6A</label>
    </interactant>
    <organismsDiffer>false</organismsDiffer>
    <experiments>3</experiments>
</comment>
<comment type="interaction">
    <interactant intactId="EBI-946046">
        <id>P54252</id>
    </interactant>
    <interactant intactId="EBI-10194801">
        <id>Q5VV42</id>
        <label>CDKAL1</label>
    </interactant>
    <organismsDiffer>false</organismsDiffer>
    <experiments>3</experiments>
</comment>
<comment type="interaction">
    <interactant intactId="EBI-946046">
        <id>P54252</id>
    </interactant>
    <interactant intactId="EBI-1056029">
        <id>Q16740</id>
        <label>CLPP</label>
    </interactant>
    <organismsDiffer>false</organismsDiffer>
    <experiments>3</experiments>
</comment>
<comment type="interaction">
    <interactant intactId="EBI-946046">
        <id>P54252</id>
    </interactant>
    <interactant intactId="EBI-10192698">
        <id>Q02930-3</id>
        <label>CREB5</label>
    </interactant>
    <organismsDiffer>false</organismsDiffer>
    <experiments>3</experiments>
</comment>
<comment type="interaction">
    <interactant intactId="EBI-946046">
        <id>P54252</id>
    </interactant>
    <interactant intactId="EBI-2872414">
        <id>Q8IUI8</id>
        <label>CRLF3</label>
    </interactant>
    <organismsDiffer>false</organismsDiffer>
    <experiments>3</experiments>
</comment>
<comment type="interaction">
    <interactant intactId="EBI-946046">
        <id>P54252</id>
    </interactant>
    <interactant intactId="EBI-3508943">
        <id>Q9H816</id>
        <label>DCLRE1B</label>
    </interactant>
    <organismsDiffer>false</organismsDiffer>
    <experiments>3</experiments>
</comment>
<comment type="interaction">
    <interactant intactId="EBI-946046">
        <id>P54252</id>
    </interactant>
    <interactant intactId="EBI-12019838">
        <id>Q9P1A6-3</id>
        <label>DLGAP2</label>
    </interactant>
    <organismsDiffer>false</organismsDiffer>
    <experiments>3</experiments>
</comment>
<comment type="interaction">
    <interactant intactId="EBI-946046">
        <id>P54252</id>
    </interactant>
    <interactant intactId="EBI-10968534">
        <id>P50570-2</id>
        <label>DNM2</label>
    </interactant>
    <organismsDiffer>false</organismsDiffer>
    <experiments>3</experiments>
</comment>
<comment type="interaction">
    <interactant intactId="EBI-946046">
        <id>P54252</id>
    </interactant>
    <interactant intactId="EBI-2870947">
        <id>Q3B7T1</id>
        <label>EDRF1</label>
    </interactant>
    <organismsDiffer>false</organismsDiffer>
    <experiments>3</experiments>
</comment>
<comment type="interaction">
    <interactant intactId="EBI-946046">
        <id>P54252</id>
    </interactant>
    <interactant intactId="EBI-739737">
        <id>Q01844</id>
        <label>EWSR1</label>
    </interactant>
    <organismsDiffer>false</organismsDiffer>
    <experiments>4</experiments>
</comment>
<comment type="interaction">
    <interactant intactId="EBI-946046">
        <id>P54252</id>
    </interactant>
    <interactant intactId="EBI-25973273">
        <id>Q01844-3</id>
        <label>EWSR1</label>
    </interactant>
    <organismsDiffer>false</organismsDiffer>
    <experiments>9</experiments>
</comment>
<comment type="interaction">
    <interactant intactId="EBI-946046">
        <id>P54252</id>
    </interactant>
    <interactant intactId="EBI-25896785">
        <id>Q01844-4</id>
        <label>EWSR1</label>
    </interactant>
    <organismsDiffer>false</organismsDiffer>
    <experiments>3</experiments>
</comment>
<comment type="interaction">
    <interactant intactId="EBI-946046">
        <id>P54252</id>
    </interactant>
    <interactant intactId="EBI-81610">
        <id>O15287</id>
        <label>FANCG</label>
    </interactant>
    <organismsDiffer>false</organismsDiffer>
    <experiments>3</experiments>
</comment>
<comment type="interaction">
    <interactant intactId="EBI-946046">
        <id>P54252</id>
    </interactant>
    <interactant intactId="EBI-11956479">
        <id>P23142-4</id>
        <label>FBLN1</label>
    </interactant>
    <organismsDiffer>false</organismsDiffer>
    <experiments>3</experiments>
</comment>
<comment type="interaction">
    <interactant intactId="EBI-946046">
        <id>P54252</id>
    </interactant>
    <interactant intactId="EBI-396453">
        <id>Q9UHY8</id>
        <label>FEZ2</label>
    </interactant>
    <organismsDiffer>false</organismsDiffer>
    <experiments>6</experiments>
</comment>
<comment type="interaction">
    <interactant intactId="EBI-946046">
        <id>P54252</id>
    </interactant>
    <interactant intactId="EBI-6425864">
        <id>Q3SYB3</id>
        <label>FOXD4L6</label>
    </interactant>
    <organismsDiffer>false</organismsDiffer>
    <experiments>3</experiments>
</comment>
<comment type="interaction">
    <interactant intactId="EBI-946046">
        <id>P54252</id>
    </interactant>
    <interactant intactId="EBI-10691738">
        <id>P06241-3</id>
        <label>FYN</label>
    </interactant>
    <organismsDiffer>false</organismsDiffer>
    <experiments>3</experiments>
</comment>
<comment type="interaction">
    <interactant intactId="EBI-946046">
        <id>P54252</id>
    </interactant>
    <interactant intactId="EBI-11110431">
        <id>Q8TB36</id>
        <label>GDAP1</label>
    </interactant>
    <organismsDiffer>false</organismsDiffer>
    <experiments>3</experiments>
</comment>
<comment type="interaction">
    <interactant intactId="EBI-946046">
        <id>P54252</id>
    </interactant>
    <interactant intactId="EBI-739467">
        <id>Q9H8Y8</id>
        <label>GORASP2</label>
    </interactant>
    <organismsDiffer>false</organismsDiffer>
    <experiments>3</experiments>
</comment>
<comment type="interaction">
    <interactant intactId="EBI-946046">
        <id>P54252</id>
    </interactant>
    <interactant intactId="EBI-6447217">
        <id>O75409</id>
        <label>H2AP</label>
    </interactant>
    <organismsDiffer>false</organismsDiffer>
    <experiments>3</experiments>
</comment>
<comment type="interaction">
    <interactant intactId="EBI-946046">
        <id>P54252</id>
    </interactant>
    <interactant intactId="EBI-79722">
        <id>P68431</id>
        <label>H3C12</label>
    </interactant>
    <organismsDiffer>false</organismsDiffer>
    <experiments>3</experiments>
</comment>
<comment type="interaction">
    <interactant intactId="EBI-946046">
        <id>P54252</id>
    </interactant>
    <interactant intactId="EBI-301762">
        <id>Q969S8</id>
        <label>HDAC10</label>
    </interactant>
    <organismsDiffer>false</organismsDiffer>
    <experiments>3</experiments>
</comment>
<comment type="interaction">
    <interactant intactId="EBI-946046">
        <id>P54252</id>
    </interactant>
    <interactant intactId="EBI-12098658">
        <id>O75330-3</id>
        <label>HMMR</label>
    </interactant>
    <organismsDiffer>false</organismsDiffer>
    <experiments>3</experiments>
</comment>
<comment type="interaction">
    <interactant intactId="EBI-946046">
        <id>P54252</id>
    </interactant>
    <interactant intactId="EBI-2831948">
        <id>P22692</id>
        <label>IGFBP4</label>
    </interactant>
    <organismsDiffer>false</organismsDiffer>
    <experiments>3</experiments>
</comment>
<comment type="interaction">
    <interactant intactId="EBI-946046">
        <id>P54252</id>
    </interactant>
    <interactant intactId="EBI-473801">
        <id>Q16891</id>
        <label>IMMT</label>
    </interactant>
    <organismsDiffer>false</organismsDiffer>
    <experiments>4</experiments>
</comment>
<comment type="interaction">
    <interactant intactId="EBI-946046">
        <id>P54252</id>
    </interactant>
    <interactant intactId="EBI-714379">
        <id>Q9Y2M5</id>
        <label>KLHL20</label>
    </interactant>
    <organismsDiffer>false</organismsDiffer>
    <experiments>3</experiments>
</comment>
<comment type="interaction">
    <interactant intactId="EBI-946046">
        <id>P54252</id>
    </interactant>
    <interactant intactId="EBI-1108377">
        <id>Q9BYZ2</id>
        <label>LDHAL6B</label>
    </interactant>
    <organismsDiffer>false</organismsDiffer>
    <experiments>3</experiments>
</comment>
<comment type="interaction">
    <interactant intactId="EBI-946046">
        <id>P54252</id>
    </interactant>
    <interactant intactId="EBI-10258746">
        <id>Q9UPM6</id>
        <label>LHX6</label>
    </interactant>
    <organismsDiffer>false</organismsDiffer>
    <experiments>3</experiments>
</comment>
<comment type="interaction">
    <interactant intactId="EBI-946046">
        <id>P54252</id>
    </interactant>
    <interactant intactId="EBI-12056869">
        <id>Q9UDY8-2</id>
        <label>MALT1</label>
    </interactant>
    <organismsDiffer>false</organismsDiffer>
    <experiments>3</experiments>
</comment>
<comment type="interaction">
    <interactant intactId="EBI-946046">
        <id>P54252</id>
    </interactant>
    <interactant intactId="EBI-2804835">
        <id>O94851</id>
        <label>MICAL2</label>
    </interactant>
    <organismsDiffer>false</organismsDiffer>
    <experiments>3</experiments>
</comment>
<comment type="interaction">
    <interactant intactId="EBI-946046">
        <id>P54252</id>
    </interactant>
    <interactant intactId="EBI-21250407">
        <id>A4FUJ8</id>
        <label>MKL1</label>
    </interactant>
    <organismsDiffer>false</organismsDiffer>
    <experiments>3</experiments>
</comment>
<comment type="interaction">
    <interactant intactId="EBI-946046">
        <id>P54252</id>
    </interactant>
    <interactant intactId="EBI-2340269">
        <id>Q13064</id>
        <label>MKRN3</label>
    </interactant>
    <organismsDiffer>false</organismsDiffer>
    <experiments>3</experiments>
</comment>
<comment type="interaction">
    <interactant intactId="EBI-946046">
        <id>P54252</id>
    </interactant>
    <interactant intactId="EBI-10698053">
        <id>Q9Y483-4</id>
        <label>MTF2</label>
    </interactant>
    <organismsDiffer>false</organismsDiffer>
    <experiments>3</experiments>
</comment>
<comment type="interaction">
    <interactant intactId="EBI-946046">
        <id>P54252</id>
    </interactant>
    <interactant intactId="EBI-6952711">
        <id>Q8WY64</id>
        <label>MYLIP</label>
    </interactant>
    <organismsDiffer>false</organismsDiffer>
    <experiments>3</experiments>
</comment>
<comment type="interaction">
    <interactant intactId="EBI-946046">
        <id>P54252</id>
    </interactant>
    <interactant intactId="EBI-3910729">
        <id>Q15466</id>
        <label>NR0B2</label>
    </interactant>
    <organismsDiffer>false</organismsDiffer>
    <experiments>3</experiments>
</comment>
<comment type="interaction">
    <interactant intactId="EBI-946046">
        <id>P54252</id>
    </interactant>
    <interactant intactId="EBI-1059321">
        <id>Q8NFH3</id>
        <label>NUP43</label>
    </interactant>
    <organismsDiffer>false</organismsDiffer>
    <experiments>3</experiments>
</comment>
<comment type="interaction">
    <interactant intactId="EBI-946046">
        <id>P54252</id>
    </interactant>
    <interactant intactId="EBI-746259">
        <id>Q96DC9</id>
        <label>OTUB2</label>
    </interactant>
    <organismsDiffer>false</organismsDiffer>
    <experiments>9</experiments>
</comment>
<comment type="interaction">
    <interactant intactId="EBI-946046">
        <id>P54252</id>
    </interactant>
    <interactant intactId="EBI-25973449">
        <id>Q96DC9-2</id>
        <label>OTUB2</label>
    </interactant>
    <organismsDiffer>false</organismsDiffer>
    <experiments>9</experiments>
</comment>
<comment type="interaction">
    <interactant intactId="EBI-946046">
        <id>P54252</id>
    </interactant>
    <interactant intactId="EBI-10300896">
        <id>Q9BWI9</id>
        <label>OTUB2</label>
    </interactant>
    <organismsDiffer>false</organismsDiffer>
    <experiments>6</experiments>
</comment>
<comment type="interaction">
    <interactant intactId="EBI-946046">
        <id>P54252</id>
    </interactant>
    <interactant intactId="EBI-2513978">
        <id>Q8N3R9</id>
        <label>PALS1</label>
    </interactant>
    <organismsDiffer>false</organismsDiffer>
    <experiments>3</experiments>
</comment>
<comment type="interaction">
    <interactant intactId="EBI-946046">
        <id>P54252</id>
    </interactant>
    <interactant intactId="EBI-747655">
        <id>Q9NVD7</id>
        <label>PARVA</label>
    </interactant>
    <organismsDiffer>false</organismsDiffer>
    <experiments>9</experiments>
</comment>
<comment type="interaction">
    <interactant intactId="EBI-946046">
        <id>P54252</id>
    </interactant>
    <interactant intactId="EBI-11022007">
        <id>Q9HBE1-4</id>
        <label>PATZ1</label>
    </interactant>
    <organismsDiffer>false</organismsDiffer>
    <experiments>3</experiments>
</comment>
<comment type="interaction">
    <interactant intactId="EBI-946046">
        <id>P54252</id>
    </interactant>
    <interactant intactId="EBI-9087775">
        <id>O15530-4</id>
        <label>PDPK1</label>
    </interactant>
    <organismsDiffer>false</organismsDiffer>
    <experiments>3</experiments>
</comment>
<comment type="interaction">
    <interactant intactId="EBI-946046">
        <id>P54252</id>
    </interactant>
    <interactant intactId="EBI-946080">
        <id>Q9BSU1</id>
        <label>PHAF1</label>
    </interactant>
    <organismsDiffer>false</organismsDiffer>
    <experiments>4</experiments>
</comment>
<comment type="interaction">
    <interactant intactId="EBI-946046">
        <id>P54252</id>
    </interactant>
    <interactant intactId="EBI-629434">
        <id>O75925</id>
        <label>PIAS1</label>
    </interactant>
    <organismsDiffer>false</organismsDiffer>
    <experiments>9</experiments>
</comment>
<comment type="interaction">
    <interactant intactId="EBI-946046">
        <id>P54252</id>
    </interactant>
    <interactant intactId="EBI-2116585">
        <id>P42336</id>
        <label>PIK3CA</label>
    </interactant>
    <organismsDiffer>false</organismsDiffer>
    <experiments>3</experiments>
</comment>
<comment type="interaction">
    <interactant intactId="EBI-946046">
        <id>P54252</id>
    </interactant>
    <interactant intactId="EBI-11028203">
        <id>Q03405-2</id>
        <label>PLAUR</label>
    </interactant>
    <organismsDiffer>false</organismsDiffer>
    <experiments>3</experiments>
</comment>
<comment type="interaction">
    <interactant intactId="EBI-946046">
        <id>P54252</id>
    </interactant>
    <interactant intactId="EBI-2557132">
        <id>Q8NBT0</id>
        <label>POC1A</label>
    </interactant>
    <organismsDiffer>false</organismsDiffer>
    <experiments>3</experiments>
</comment>
<comment type="interaction">
    <interactant intactId="EBI-946046">
        <id>P54252</id>
    </interactant>
    <interactant intactId="EBI-476586">
        <id>P17612</id>
        <label>PRKACA</label>
    </interactant>
    <organismsDiffer>false</organismsDiffer>
    <experiments>3</experiments>
</comment>
<comment type="interaction">
    <interactant intactId="EBI-946046">
        <id>P54252</id>
    </interactant>
    <interactant intactId="EBI-357659">
        <id>P51665</id>
        <label>PSMD7</label>
    </interactant>
    <organismsDiffer>false</organismsDiffer>
    <experiments>9</experiments>
</comment>
<comment type="interaction">
    <interactant intactId="EBI-946046">
        <id>P54252</id>
    </interactant>
    <interactant intactId="EBI-746453">
        <id>P54725</id>
        <label>RAD23A</label>
    </interactant>
    <organismsDiffer>false</organismsDiffer>
    <experiments>9</experiments>
</comment>
<comment type="interaction">
    <interactant intactId="EBI-946046">
        <id>P54252</id>
    </interactant>
    <interactant intactId="EBI-438710">
        <id>Q9NS23-4</id>
        <label>RASSF1</label>
    </interactant>
    <organismsDiffer>false</organismsDiffer>
    <experiments>3</experiments>
</comment>
<comment type="interaction">
    <interactant intactId="EBI-946046">
        <id>P54252</id>
    </interactant>
    <interactant intactId="EBI-740343">
        <id>Q93062-3</id>
        <label>RBPMS</label>
    </interactant>
    <organismsDiffer>false</organismsDiffer>
    <experiments>3</experiments>
</comment>
<comment type="interaction">
    <interactant intactId="EBI-946046">
        <id>P54252</id>
    </interactant>
    <interactant intactId="EBI-21535400">
        <id>Q6ZNA4-2</id>
        <label>RNF111</label>
    </interactant>
    <organismsDiffer>false</organismsDiffer>
    <experiments>6</experiments>
</comment>
<comment type="interaction">
    <interactant intactId="EBI-946046">
        <id>P54252</id>
    </interactant>
    <interactant intactId="EBI-948111">
        <id>Q96EP0</id>
        <label>RNF31</label>
    </interactant>
    <organismsDiffer>false</organismsDiffer>
    <experiments>3</experiments>
</comment>
<comment type="interaction">
    <interactant intactId="EBI-946046">
        <id>P54252</id>
    </interactant>
    <interactant intactId="EBI-25973375">
        <id>Q8N5Z7</id>
        <label>RPL6</label>
    </interactant>
    <organismsDiffer>false</organismsDiffer>
    <experiments>6</experiments>
</comment>
<comment type="interaction">
    <interactant intactId="EBI-946046">
        <id>P54252</id>
    </interactant>
    <interactant intactId="EBI-1642329">
        <id>Q8TBK5</id>
        <label>RPL6</label>
    </interactant>
    <organismsDiffer>false</organismsDiffer>
    <experiments>9</experiments>
</comment>
<comment type="interaction">
    <interactant intactId="EBI-946046">
        <id>P54252</id>
    </interactant>
    <interactant intactId="EBI-10248967">
        <id>Q66K80</id>
        <label>RUSC1-AS1</label>
    </interactant>
    <organismsDiffer>false</organismsDiffer>
    <experiments>3</experiments>
</comment>
<comment type="interaction">
    <interactant intactId="EBI-946046">
        <id>P54252</id>
    </interactant>
    <interactant intactId="EBI-8007671">
        <id>P16581</id>
        <label>SELE</label>
    </interactant>
    <organismsDiffer>false</organismsDiffer>
    <experiments>3</experiments>
</comment>
<comment type="interaction">
    <interactant intactId="EBI-946046">
        <id>P54252</id>
    </interactant>
    <interactant intactId="EBI-350723">
        <id>P50454</id>
        <label>SERPINH1</label>
    </interactant>
    <organismsDiffer>false</organismsDiffer>
    <experiments>3</experiments>
</comment>
<comment type="interaction">
    <interactant intactId="EBI-946046">
        <id>P54252</id>
    </interactant>
    <interactant intactId="EBI-6503765">
        <id>Q8IVP1</id>
        <label>SH3GL3</label>
    </interactant>
    <organismsDiffer>false</organismsDiffer>
    <experiments>3</experiments>
</comment>
<comment type="interaction">
    <interactant intactId="EBI-946046">
        <id>P54252</id>
    </interactant>
    <interactant intactId="EBI-25845274">
        <id>Q9NQ40</id>
        <label>SLC52A3</label>
    </interactant>
    <organismsDiffer>false</organismsDiffer>
    <experiments>3</experiments>
</comment>
<comment type="interaction">
    <interactant intactId="EBI-946046">
        <id>P54252</id>
    </interactant>
    <interactant intactId="EBI-9087806">
        <id>O95416</id>
        <label>SOX14</label>
    </interactant>
    <organismsDiffer>false</organismsDiffer>
    <experiments>3</experiments>
</comment>
<comment type="interaction">
    <interactant intactId="EBI-946046">
        <id>P54252</id>
    </interactant>
    <interactant intactId="EBI-11959123">
        <id>Q99932-2</id>
        <label>SPAG8</label>
    </interactant>
    <organismsDiffer>false</organismsDiffer>
    <experiments>6</experiments>
</comment>
<comment type="interaction">
    <interactant intactId="EBI-946046">
        <id>P54252</id>
    </interactant>
    <interactant intactId="EBI-2510414">
        <id>Q8IUW3</id>
        <label>SPATA2L</label>
    </interactant>
    <organismsDiffer>false</organismsDiffer>
    <experiments>3</experiments>
</comment>
<comment type="interaction">
    <interactant intactId="EBI-946046">
        <id>P54252</id>
    </interactant>
    <interactant intactId="EBI-10174456">
        <id>Q8N865</id>
        <label>SPMIP4</label>
    </interactant>
    <organismsDiffer>false</organismsDiffer>
    <experiments>3</experiments>
</comment>
<comment type="interaction">
    <interactant intactId="EBI-946046">
        <id>P54252</id>
    </interactant>
    <interactant intactId="EBI-863797">
        <id>Q9NRP7</id>
        <label>STK36</label>
    </interactant>
    <organismsDiffer>false</organismsDiffer>
    <experiments>3</experiments>
</comment>
<comment type="interaction">
    <interactant intactId="EBI-946046">
        <id>P54252</id>
    </interactant>
    <interactant intactId="EBI-12243980">
        <id>Q8TDW5-2</id>
        <label>SYTL5</label>
    </interactant>
    <organismsDiffer>false</organismsDiffer>
    <experiments>3</experiments>
</comment>
<comment type="interaction">
    <interactant intactId="EBI-946046">
        <id>P54252</id>
    </interactant>
    <interactant intactId="EBI-6427217">
        <id>Q9Y458</id>
        <label>TBX22</label>
    </interactant>
    <organismsDiffer>false</organismsDiffer>
    <experiments>3</experiments>
</comment>
<comment type="interaction">
    <interactant intactId="EBI-946046">
        <id>P54252</id>
    </interactant>
    <interactant intactId="EBI-2819865">
        <id>O95551</id>
        <label>TDP2</label>
    </interactant>
    <organismsDiffer>false</organismsDiffer>
    <experiments>3</experiments>
</comment>
<comment type="interaction">
    <interactant intactId="EBI-946046">
        <id>P54252</id>
    </interactant>
    <interactant intactId="EBI-1043674">
        <id>Q9Y4R8</id>
        <label>TELO2</label>
    </interactant>
    <organismsDiffer>false</organismsDiffer>
    <experiments>3</experiments>
</comment>
<comment type="interaction">
    <interactant intactId="EBI-946046">
        <id>P54252</id>
    </interactant>
    <interactant intactId="EBI-25840535">
        <id>Q15554-4</id>
        <label>TERF2</label>
    </interactant>
    <organismsDiffer>false</organismsDiffer>
    <experiments>3</experiments>
</comment>
<comment type="interaction">
    <interactant intactId="EBI-946046">
        <id>P54252</id>
    </interactant>
    <interactant intactId="EBI-11523345">
        <id>Q8IYF3-3</id>
        <label>TEX11</label>
    </interactant>
    <organismsDiffer>false</organismsDiffer>
    <experiments>6</experiments>
</comment>
<comment type="interaction">
    <interactant intactId="EBI-946046">
        <id>P54252</id>
    </interactant>
    <interactant intactId="EBI-13323487">
        <id>Q8NA77</id>
        <label>TEX19</label>
    </interactant>
    <organismsDiffer>false</organismsDiffer>
    <experiments>3</experiments>
</comment>
<comment type="interaction">
    <interactant intactId="EBI-946046">
        <id>P54252</id>
    </interactant>
    <interactant intactId="EBI-296151">
        <id>P37173</id>
        <label>TGFBR2</label>
    </interactant>
    <organismsDiffer>false</organismsDiffer>
    <experiments>3</experiments>
</comment>
<comment type="interaction">
    <interactant intactId="EBI-946046">
        <id>P54252</id>
    </interactant>
    <interactant intactId="EBI-16825459">
        <id>Q9BXR5</id>
        <label>TLR10</label>
    </interactant>
    <organismsDiffer>false</organismsDiffer>
    <experiments>3</experiments>
</comment>
<comment type="interaction">
    <interactant intactId="EBI-946046">
        <id>P54252</id>
    </interactant>
    <interactant intactId="EBI-1390168">
        <id>Q9H8H3</id>
        <label>TMT1A</label>
    </interactant>
    <organismsDiffer>false</organismsDiffer>
    <experiments>3</experiments>
</comment>
<comment type="interaction">
    <interactant intactId="EBI-946046">
        <id>P54252</id>
    </interactant>
    <interactant intactId="EBI-741480">
        <id>Q9UMX0</id>
        <label>UBQLN1</label>
    </interactant>
    <organismsDiffer>false</organismsDiffer>
    <experiments>6</experiments>
</comment>
<comment type="interaction">
    <interactant intactId="EBI-946046">
        <id>P54252</id>
    </interactant>
    <interactant intactId="EBI-25834258">
        <id>P13051-2</id>
        <label>UNG</label>
    </interactant>
    <organismsDiffer>false</organismsDiffer>
    <experiments>3</experiments>
</comment>
<comment type="interaction">
    <interactant intactId="EBI-946046">
        <id>P54252</id>
    </interactant>
    <interactant intactId="EBI-714351">
        <id>Q92995</id>
        <label>USP13</label>
    </interactant>
    <organismsDiffer>false</organismsDiffer>
    <experiments>3</experiments>
</comment>
<comment type="interaction">
    <interactant intactId="EBI-946046">
        <id>P54252</id>
    </interactant>
    <interactant intactId="EBI-355164">
        <id>P55072</id>
        <label>VCP</label>
    </interactant>
    <organismsDiffer>false</organismsDiffer>
    <experiments>4</experiments>
</comment>
<comment type="interaction">
    <interactant intactId="EBI-946046">
        <id>P54252</id>
    </interactant>
    <interactant intactId="EBI-2850578">
        <id>Q8NEZ2</id>
        <label>VPS37A</label>
    </interactant>
    <organismsDiffer>false</organismsDiffer>
    <experiments>3</experiments>
</comment>
<comment type="interaction">
    <interactant intactId="EBI-946046">
        <id>P54252</id>
    </interactant>
    <interactant intactId="EBI-25840023">
        <id>Q15007-2</id>
        <label>WTAP</label>
    </interactant>
    <organismsDiffer>false</organismsDiffer>
    <experiments>3</experiments>
</comment>
<comment type="interaction">
    <interactant intactId="EBI-946046">
        <id>P54252</id>
    </interactant>
    <interactant intactId="EBI-742157">
        <id>Q9H0M0</id>
        <label>WWP1</label>
    </interactant>
    <organismsDiffer>false</organismsDiffer>
    <experiments>3</experiments>
</comment>
<comment type="interaction">
    <interactant intactId="EBI-946046">
        <id>P54252</id>
    </interactant>
    <interactant intactId="EBI-10693326">
        <id>Q9H4I2-2</id>
        <label>ZHX3</label>
    </interactant>
    <organismsDiffer>false</organismsDiffer>
    <experiments>3</experiments>
</comment>
<comment type="interaction">
    <interactant intactId="EBI-946046">
        <id>P54252</id>
    </interactant>
    <interactant intactId="EBI-2682299">
        <id>Q96NC0</id>
        <label>ZMAT2</label>
    </interactant>
    <organismsDiffer>false</organismsDiffer>
    <experiments>3</experiments>
</comment>
<comment type="interaction">
    <interactant intactId="EBI-946046">
        <id>P54252</id>
    </interactant>
    <interactant intactId="EBI-2813661">
        <id>Q8N895</id>
        <label>ZNF366</label>
    </interactant>
    <organismsDiffer>false</organismsDiffer>
    <experiments>3</experiments>
</comment>
<comment type="interaction">
    <interactant intactId="EBI-946068">
        <id>P54252-1</id>
    </interactant>
    <interactant intactId="EBI-946068">
        <id>P54252-1</id>
        <label>ATXN3</label>
    </interactant>
    <organismsDiffer>false</organismsDiffer>
    <experiments>6</experiments>
</comment>
<comment type="interaction">
    <interactant intactId="EBI-946068">
        <id>P54252-1</id>
    </interactant>
    <interactant intactId="EBI-949378">
        <id>Q14457</id>
        <label>BECN1</label>
    </interactant>
    <organismsDiffer>false</organismsDiffer>
    <experiments>10</experiments>
</comment>
<comment type="interaction">
    <interactant intactId="EBI-946068">
        <id>P54252-1</id>
    </interactant>
    <interactant intactId="EBI-712814">
        <id>P54257</id>
        <label>HAP1</label>
    </interactant>
    <organismsDiffer>false</organismsDiffer>
    <experiments>6</experiments>
</comment>
<comment type="interaction">
    <interactant intactId="EBI-946068">
        <id>P54252-1</id>
    </interactant>
    <interactant intactId="EBI-3390054">
        <id>P0CG48</id>
        <label>UBC</label>
    </interactant>
    <organismsDiffer>false</organismsDiffer>
    <experiments>2</experiments>
</comment>
<comment type="interaction">
    <interactant intactId="EBI-946068">
        <id>P54252-1</id>
    </interactant>
    <interactant intactId="EBI-355164">
        <id>P55072</id>
        <label>VCP</label>
    </interactant>
    <organismsDiffer>false</organismsDiffer>
    <experiments>16</experiments>
</comment>
<comment type="interaction">
    <interactant intactId="EBI-9684323">
        <id>P54252-2</id>
    </interactant>
    <interactant intactId="EBI-716346">
        <id>O60260</id>
        <label>PRKN</label>
    </interactant>
    <organismsDiffer>false</organismsDiffer>
    <experiments>5</experiments>
</comment>
<comment type="subcellular location">
    <subcellularLocation>
        <location evidence="18">Nucleus matrix</location>
    </subcellularLocation>
    <subcellularLocation>
        <location evidence="14">Nucleus</location>
    </subcellularLocation>
    <subcellularLocation>
        <location evidence="15">Lysosome membrane</location>
        <topology evidence="15">Peripheral membrane protein</topology>
    </subcellularLocation>
    <text evidence="15 18">Predominantly nuclear, but not exclusively, inner nuclear matrix (PubMed:9580663). Recruited to lysosomal membrane in response to amino acid deprivation by the RagA/RRAGA-RagB/RRAGB complex (PubMed:33157014).</text>
</comment>
<comment type="alternative products">
    <event type="alternative splicing"/>
    <isoform>
        <id>P54252-2</id>
        <name>2</name>
        <sequence type="displayed"/>
    </isoform>
    <isoform>
        <id>P54252-1</id>
        <name>1</name>
        <name>MJD1a</name>
        <sequence type="described" ref="VSP_002784"/>
    </isoform>
    <isoform>
        <id>P54252-3</id>
        <name>3</name>
        <sequence type="described" ref="VSP_002783"/>
    </isoform>
    <isoform>
        <id>P54252-4</id>
        <name>4</name>
        <sequence type="described" ref="VSP_047086"/>
    </isoform>
    <isoform>
        <id>P54252-5</id>
        <name>5</name>
        <sequence type="described" ref="VSP_047085"/>
    </isoform>
</comment>
<comment type="tissue specificity">
    <text>Ubiquitous.</text>
</comment>
<comment type="domain">
    <text evidence="1">The UIM domains bind ubiquitin and interact with various E3 ubiquitin-protein ligase, such as STUB1/CHIP. They are essential to limit the length of ubiquitin chains (By similarity).</text>
</comment>
<comment type="domain">
    <text evidence="13">The poly-Gln domain is involved in the interaction with BECN1 and subsequent starvation-induced autophagy (PubMed:28445460).</text>
</comment>
<comment type="PTM">
    <text evidence="12">Monoubiquitinated N-terminally by UBE2W, possibly leading to activate the deubiquitinating enzyme activity (PubMed:23696636).</text>
</comment>
<comment type="polymorphism">
    <text evidence="16 17">The poly-Gln region of ATXN3 is highly polymorphic (14 to 41 repeats) in the normal population and is expanded to about 55-82 repeats in spinocerebellar ataxia 3 (SCA3) patients (PubMed:7874163, PubMed:9274833).</text>
</comment>
<comment type="disease" evidence="16">
    <disease id="DI-01068">
        <name>Spinocerebellar ataxia 3</name>
        <acronym>SCA3</acronym>
        <description>Spinocerebellar ataxia is a clinically and genetically heterogeneous group of cerebellar disorders. Patients show progressive incoordination of gait and often poor coordination of hands, speech and eye movements, due to cerebellum degeneration with variable involvement of the brainstem and spinal cord. SCA3 belongs to the autosomal dominant cerebellar ataxias type I (ADCA I) which are characterized by cerebellar ataxia in combination with additional clinical features like optic atrophy, ophthalmoplegia, bulbar and extrapyramidal signs, peripheral neuropathy and dementia. The molecular defect in SCA3 is the a CAG repeat expansion in ATX3 coding region. Longer expansions result in earlier onset and more severe clinical manifestations of the disease.</description>
        <dbReference type="MIM" id="109150"/>
    </disease>
    <text>The disease is caused by variants affecting the gene represented in this entry.</text>
</comment>
<organism>
    <name type="scientific">Homo sapiens</name>
    <name type="common">Human</name>
    <dbReference type="NCBI Taxonomy" id="9606"/>
    <lineage>
        <taxon>Eukaryota</taxon>
        <taxon>Metazoa</taxon>
        <taxon>Chordata</taxon>
        <taxon>Craniata</taxon>
        <taxon>Vertebrata</taxon>
        <taxon>Euteleostomi</taxon>
        <taxon>Mammalia</taxon>
        <taxon>Eutheria</taxon>
        <taxon>Euarchontoglires</taxon>
        <taxon>Primates</taxon>
        <taxon>Haplorrhini</taxon>
        <taxon>Catarrhini</taxon>
        <taxon>Hominidae</taxon>
        <taxon>Homo</taxon>
    </lineage>
</organism>
<gene>
    <name evidence="20 27" type="primary">ATXN3</name>
    <name type="synonym">ATX3</name>
    <name type="synonym">MJD</name>
    <name type="synonym">MJD1</name>
    <name type="synonym">SCA3</name>
</gene>
<feature type="chain" id="PRO_0000053831" description="Ataxin-3">
    <location>
        <begin position="1"/>
        <end position="361"/>
    </location>
</feature>
<feature type="domain" description="Josephin" evidence="3">
    <location>
        <begin position="1"/>
        <end position="180"/>
    </location>
</feature>
<feature type="domain" description="UIM 1" evidence="2">
    <location>
        <begin position="224"/>
        <end position="243"/>
    </location>
</feature>
<feature type="domain" description="UIM 2" evidence="2">
    <location>
        <begin position="244"/>
        <end position="263"/>
    </location>
</feature>
<feature type="domain" description="UIM 3" evidence="2">
    <location>
        <begin position="331"/>
        <end position="349"/>
    </location>
</feature>
<feature type="region of interest" description="Disordered" evidence="4">
    <location>
        <begin position="258"/>
        <end position="338"/>
    </location>
</feature>
<feature type="compositionally biased region" description="Polar residues" evidence="4">
    <location>
        <begin position="258"/>
        <end position="278"/>
    </location>
</feature>
<feature type="compositionally biased region" description="Basic and acidic residues" evidence="4">
    <location>
        <begin position="279"/>
        <end position="293"/>
    </location>
</feature>
<feature type="compositionally biased region" description="Low complexity" evidence="4">
    <location>
        <begin position="294"/>
        <end position="305"/>
    </location>
</feature>
<feature type="compositionally biased region" description="Polar residues" evidence="4">
    <location>
        <begin position="306"/>
        <end position="325"/>
    </location>
</feature>
<feature type="active site" description="Nucleophile" evidence="11 26">
    <location>
        <position position="14"/>
    </location>
</feature>
<feature type="active site" description="Proton acceptor" evidence="24 25">
    <location>
        <position position="119"/>
    </location>
</feature>
<feature type="active site" evidence="24 25">
    <location>
        <position position="134"/>
    </location>
</feature>
<feature type="modified residue" description="Phosphoserine" evidence="1">
    <location>
        <position position="219"/>
    </location>
</feature>
<feature type="modified residue" description="Phosphoserine" evidence="28">
    <location>
        <position position="265"/>
    </location>
</feature>
<feature type="modified residue" description="Phosphoserine" evidence="1">
    <location>
        <position position="272"/>
    </location>
</feature>
<feature type="modified residue" description="Phosphoserine" evidence="1">
    <location>
        <position position="328"/>
    </location>
</feature>
<feature type="cross-link" description="Peptide (Met-Gly) (interchain with G-Cter in ubiquitin)" evidence="12">
    <location>
        <position position="1"/>
    </location>
</feature>
<feature type="cross-link" description="Glycyl lysine isopeptide (Lys-Gly) (interchain with G-Cter in ubiquitin)" evidence="12">
    <location>
        <position position="200"/>
    </location>
</feature>
<feature type="splice variant" id="VSP_047085" description="In isoform 5." evidence="23">
    <location>
        <begin position="1"/>
        <end position="179"/>
    </location>
</feature>
<feature type="splice variant" id="VSP_002783" description="In isoform 3." evidence="23">
    <location>
        <begin position="10"/>
        <end position="64"/>
    </location>
</feature>
<feature type="splice variant" id="VSP_047086" description="In isoform 4." evidence="23">
    <location>
        <begin position="63"/>
        <end position="77"/>
    </location>
</feature>
<feature type="splice variant" id="VSP_002784" description="In isoform 1." evidence="21 22">
    <original>DAMSEEDMLQAAVTMSLETVRNDLKTEGKK</original>
    <variation>KACSPFIMFATFTLYLTYELHVIFALHYSSFPL</variation>
    <location>
        <begin position="332"/>
        <end position="361"/>
    </location>
</feature>
<feature type="sequence variant" id="VAR_013688" description="In dbSNP:rs1048755." evidence="16 17 19">
    <original>V</original>
    <variation>M</variation>
    <location>
        <position position="212"/>
    </location>
</feature>
<feature type="sequence variant" id="VAR_013689" evidence="7 16 17">
    <original>G</original>
    <variation>QQQQQQQQQQQQR</variation>
    <location>
        <position position="306"/>
    </location>
</feature>
<feature type="mutagenesis site" description="Loss of deubiquitination activity." evidence="9 11 15">
    <original>C</original>
    <variation>A</variation>
    <location>
        <position position="14"/>
    </location>
</feature>
<feature type="mutagenesis site" description="Inhibits substrate trapping." evidence="9">
    <original>S</original>
    <variation>A</variation>
    <location>
        <position position="236"/>
    </location>
</feature>
<feature type="mutagenesis site" description="Inhibits substrate trapping." evidence="9">
    <original>S</original>
    <variation>A</variation>
    <location>
        <position position="256"/>
    </location>
</feature>
<feature type="mutagenesis site" description="No effect on ubiquitination." evidence="9">
    <original>S</original>
    <variation>A</variation>
    <location>
        <position position="335"/>
    </location>
</feature>
<feature type="sequence conflict" description="In Ref. 2; AAB63352/AAB63353/AAB63354." evidence="23" ref="2">
    <original>A</original>
    <variation>T</variation>
    <location>
        <position position="252"/>
    </location>
</feature>
<feature type="helix" evidence="30">
    <location>
        <begin position="1"/>
        <end position="3"/>
    </location>
</feature>
<feature type="helix" evidence="29">
    <location>
        <begin position="14"/>
        <end position="22"/>
    </location>
</feature>
<feature type="strand" evidence="31">
    <location>
        <begin position="23"/>
        <end position="25"/>
    </location>
</feature>
<feature type="helix" evidence="29">
    <location>
        <begin position="30"/>
        <end position="49"/>
    </location>
</feature>
<feature type="turn" evidence="30">
    <location>
        <begin position="53"/>
        <end position="55"/>
    </location>
</feature>
<feature type="helix" evidence="29">
    <location>
        <begin position="56"/>
        <end position="62"/>
    </location>
</feature>
<feature type="strand" evidence="29">
    <location>
        <begin position="70"/>
        <end position="73"/>
    </location>
</feature>
<feature type="helix" evidence="29">
    <location>
        <begin position="78"/>
        <end position="85"/>
    </location>
</feature>
<feature type="turn" evidence="29">
    <location>
        <begin position="86"/>
        <end position="88"/>
    </location>
</feature>
<feature type="strand" evidence="29">
    <location>
        <begin position="90"/>
        <end position="96"/>
    </location>
</feature>
<feature type="turn" evidence="29">
    <location>
        <begin position="97"/>
        <end position="100"/>
    </location>
</feature>
<feature type="helix" evidence="29">
    <location>
        <begin position="106"/>
        <end position="108"/>
    </location>
</feature>
<feature type="strand" evidence="29">
    <location>
        <begin position="109"/>
        <end position="116"/>
    </location>
</feature>
<feature type="strand" evidence="29">
    <location>
        <begin position="119"/>
        <end position="126"/>
    </location>
</feature>
<feature type="strand" evidence="29">
    <location>
        <begin position="129"/>
        <end position="134"/>
    </location>
</feature>
<feature type="strand" evidence="29">
    <location>
        <begin position="141"/>
        <end position="143"/>
    </location>
</feature>
<feature type="helix" evidence="29">
    <location>
        <begin position="145"/>
        <end position="158"/>
    </location>
</feature>
<feature type="strand" evidence="29">
    <location>
        <begin position="161"/>
        <end position="167"/>
    </location>
</feature>
<feature type="helix" evidence="29">
    <location>
        <begin position="173"/>
        <end position="176"/>
    </location>
</feature>
<feature type="helix" evidence="31">
    <location>
        <begin position="178"/>
        <end position="180"/>
    </location>
</feature>
<feature type="helix" evidence="32">
    <location>
        <begin position="222"/>
        <end position="240"/>
    </location>
</feature>
<feature type="strand" evidence="32">
    <location>
        <begin position="243"/>
        <end position="245"/>
    </location>
</feature>
<feature type="helix" evidence="32">
    <location>
        <begin position="246"/>
        <end position="257"/>
    </location>
</feature>
<feature type="helix" evidence="33">
    <location>
        <begin position="279"/>
        <end position="282"/>
    </location>
</feature>
<feature type="strand" evidence="33">
    <location>
        <begin position="287"/>
        <end position="289"/>
    </location>
</feature>
<feature type="sequence variant" id="VAR_082841" description="In short isoform 1, due to a stop-gain single nucleotide variant, has reduced half-life due to increased proteasomal degradation, has reduced solubility and increased tendency to form aggregates, increased localization to the nucleus." evidence="5 14 16 17">
    <location sequence="P54252-1">
        <begin position="349"/>
        <end position="364"/>
    </location>
</feature>
<reference key="1">
    <citation type="journal article" date="1994" name="Nat. Genet.">
        <title>CAG expansions in a novel gene for Machado-Joseph disease at chromosome 14q32.1.</title>
        <authorList>
            <person name="Kawaguchi Y."/>
            <person name="Okamoto T."/>
            <person name="Taniwaki M."/>
            <person name="Aizawa M."/>
            <person name="Inoue M."/>
            <person name="Katayama S."/>
            <person name="Kawakami H."/>
            <person name="Nakamura S."/>
            <person name="Nishimura M."/>
            <person name="Akiguchi I."/>
            <person name="Kimura J."/>
            <person name="Narumiya S."/>
            <person name="Kakizuka A."/>
        </authorList>
    </citation>
    <scope>NUCLEOTIDE SEQUENCE [MRNA] (ISOFORM 1)</scope>
    <scope>VARIANTS MET-212 AND GLY-306 DELINS GLN-GLN-GLN-GLN-GLN-GLN-GLN-GLN-GLN-GLN-GLN-GLN-ARG</scope>
    <scope>VARIANT 349-TYR--LEU-364 DEL (ISOFORM 1)</scope>
    <scope>INVOLVEMENT IN SCA3</scope>
    <source>
        <tissue>Brain</tissue>
    </source>
</reference>
<reference key="2">
    <citation type="journal article" date="1997" name="Neurosci. Res.">
        <title>Machado-Joseph disease gene products carrying different carboxyl termini.</title>
        <authorList>
            <person name="Goto J."/>
            <person name="Watanabe M."/>
            <person name="Ichikawa Y."/>
            <person name="Yee S.-B."/>
            <person name="Ihara N."/>
            <person name="Endo K."/>
            <person name="Igarashi S."/>
            <person name="Takiyama Y."/>
            <person name="Gaspar C."/>
            <person name="Maciel P."/>
            <person name="Tsuji S."/>
            <person name="Rouleau G.A."/>
            <person name="Kanazawa I."/>
        </authorList>
    </citation>
    <scope>NUCLEOTIDE SEQUENCE [MRNA] (ISOFORMS 1 AND 2)</scope>
    <scope>VARIANTS MET-212 AND GLY-306 DELINS GLN-GLN-GLN-GLN-GLN-GLN-GLN-GLN-GLN-GLN-GLN-GLN-ARG</scope>
    <scope>VARIANT 349-TYR--LEU-364 DEL (ISOFORM 1)</scope>
</reference>
<reference key="3">
    <citation type="journal article" date="2001" name="J. Hum. Genet.">
        <title>The genomic structure and expression of MJD, the Machado-Joseph disease gene.</title>
        <authorList>
            <person name="Ichikawa Y."/>
            <person name="Goto J."/>
            <person name="Hattori M."/>
            <person name="Toyoda A."/>
            <person name="Ishii K."/>
            <person name="Jeong S.-Y."/>
            <person name="Hashida H."/>
            <person name="Masuda N."/>
            <person name="Ogata K."/>
            <person name="Kasai F."/>
            <person name="Hirai M."/>
            <person name="Maciel P."/>
            <person name="Rouleau G.A."/>
            <person name="Sakaki Y."/>
            <person name="Kanazawa I."/>
        </authorList>
    </citation>
    <scope>NUCLEOTIDE SEQUENCE [GENOMIC DNA]</scope>
    <scope>ALTERNATIVE SPLICING</scope>
    <scope>VARIANT 349-TYR--LEU-364 DEL (ISOFORM 1)</scope>
</reference>
<reference key="4">
    <citation type="submission" date="2007-07" db="EMBL/GenBank/DDBJ databases">
        <authorList>
            <consortium name="NIEHS SNPs program"/>
        </authorList>
    </citation>
    <scope>NUCLEOTIDE SEQUENCE [GENOMIC DNA]</scope>
    <scope>VARIANT MET-212</scope>
</reference>
<reference key="5">
    <citation type="journal article" date="2003" name="Nature">
        <title>The DNA sequence and analysis of human chromosome 14.</title>
        <authorList>
            <person name="Heilig R."/>
            <person name="Eckenberg R."/>
            <person name="Petit J.-L."/>
            <person name="Fonknechten N."/>
            <person name="Da Silva C."/>
            <person name="Cattolico L."/>
            <person name="Levy M."/>
            <person name="Barbe V."/>
            <person name="De Berardinis V."/>
            <person name="Ureta-Vidal A."/>
            <person name="Pelletier E."/>
            <person name="Vico V."/>
            <person name="Anthouard V."/>
            <person name="Rowen L."/>
            <person name="Madan A."/>
            <person name="Qin S."/>
            <person name="Sun H."/>
            <person name="Du H."/>
            <person name="Pepin K."/>
            <person name="Artiguenave F."/>
            <person name="Robert C."/>
            <person name="Cruaud C."/>
            <person name="Bruels T."/>
            <person name="Jaillon O."/>
            <person name="Friedlander L."/>
            <person name="Samson G."/>
            <person name="Brottier P."/>
            <person name="Cure S."/>
            <person name="Segurens B."/>
            <person name="Aniere F."/>
            <person name="Samain S."/>
            <person name="Crespeau H."/>
            <person name="Abbasi N."/>
            <person name="Aiach N."/>
            <person name="Boscus D."/>
            <person name="Dickhoff R."/>
            <person name="Dors M."/>
            <person name="Dubois I."/>
            <person name="Friedman C."/>
            <person name="Gouyvenoux M."/>
            <person name="James R."/>
            <person name="Madan A."/>
            <person name="Mairey-Estrada B."/>
            <person name="Mangenot S."/>
            <person name="Martins N."/>
            <person name="Menard M."/>
            <person name="Oztas S."/>
            <person name="Ratcliffe A."/>
            <person name="Shaffer T."/>
            <person name="Trask B."/>
            <person name="Vacherie B."/>
            <person name="Bellemere C."/>
            <person name="Belser C."/>
            <person name="Besnard-Gonnet M."/>
            <person name="Bartol-Mavel D."/>
            <person name="Boutard M."/>
            <person name="Briez-Silla S."/>
            <person name="Combette S."/>
            <person name="Dufosse-Laurent V."/>
            <person name="Ferron C."/>
            <person name="Lechaplais C."/>
            <person name="Louesse C."/>
            <person name="Muselet D."/>
            <person name="Magdelenat G."/>
            <person name="Pateau E."/>
            <person name="Petit E."/>
            <person name="Sirvain-Trukniewicz P."/>
            <person name="Trybou A."/>
            <person name="Vega-Czarny N."/>
            <person name="Bataille E."/>
            <person name="Bluet E."/>
            <person name="Bordelais I."/>
            <person name="Dubois M."/>
            <person name="Dumont C."/>
            <person name="Guerin T."/>
            <person name="Haffray S."/>
            <person name="Hammadi R."/>
            <person name="Muanga J."/>
            <person name="Pellouin V."/>
            <person name="Robert D."/>
            <person name="Wunderle E."/>
            <person name="Gauguet G."/>
            <person name="Roy A."/>
            <person name="Sainte-Marthe L."/>
            <person name="Verdier J."/>
            <person name="Verdier-Discala C."/>
            <person name="Hillier L.W."/>
            <person name="Fulton L."/>
            <person name="McPherson J."/>
            <person name="Matsuda F."/>
            <person name="Wilson R."/>
            <person name="Scarpelli C."/>
            <person name="Gyapay G."/>
            <person name="Wincker P."/>
            <person name="Saurin W."/>
            <person name="Quetier F."/>
            <person name="Waterston R."/>
            <person name="Hood L."/>
            <person name="Weissenbach J."/>
        </authorList>
    </citation>
    <scope>NUCLEOTIDE SEQUENCE [LARGE SCALE GENOMIC DNA]</scope>
</reference>
<reference key="6">
    <citation type="submission" date="2005-07" db="EMBL/GenBank/DDBJ databases">
        <authorList>
            <person name="Mural R.J."/>
            <person name="Istrail S."/>
            <person name="Sutton G.G."/>
            <person name="Florea L."/>
            <person name="Halpern A.L."/>
            <person name="Mobarry C.M."/>
            <person name="Lippert R."/>
            <person name="Walenz B."/>
            <person name="Shatkay H."/>
            <person name="Dew I."/>
            <person name="Miller J.R."/>
            <person name="Flanigan M.J."/>
            <person name="Edwards N.J."/>
            <person name="Bolanos R."/>
            <person name="Fasulo D."/>
            <person name="Halldorsson B.V."/>
            <person name="Hannenhalli S."/>
            <person name="Turner R."/>
            <person name="Yooseph S."/>
            <person name="Lu F."/>
            <person name="Nusskern D.R."/>
            <person name="Shue B.C."/>
            <person name="Zheng X.H."/>
            <person name="Zhong F."/>
            <person name="Delcher A.L."/>
            <person name="Huson D.H."/>
            <person name="Kravitz S.A."/>
            <person name="Mouchard L."/>
            <person name="Reinert K."/>
            <person name="Remington K.A."/>
            <person name="Clark A.G."/>
            <person name="Waterman M.S."/>
            <person name="Eichler E.E."/>
            <person name="Adams M.D."/>
            <person name="Hunkapiller M.W."/>
            <person name="Myers E.W."/>
            <person name="Venter J.C."/>
        </authorList>
    </citation>
    <scope>NUCLEOTIDE SEQUENCE [LARGE SCALE GENOMIC DNA]</scope>
</reference>
<reference key="7">
    <citation type="journal article" date="2004" name="Genome Res.">
        <title>The status, quality, and expansion of the NIH full-length cDNA project: the Mammalian Gene Collection (MGC).</title>
        <authorList>
            <consortium name="The MGC Project Team"/>
        </authorList>
    </citation>
    <scope>NUCLEOTIDE SEQUENCE [LARGE SCALE MRNA] (ISOFORM 2)</scope>
    <scope>VARIANT GLY-306 DELINS GLN-GLN-GLN-GLN-GLN-GLN-GLN-GLN-GLN-GLN-GLN-GLN-ARG</scope>
    <source>
        <tissue>Mammary gland</tissue>
    </source>
</reference>
<reference key="8">
    <citation type="journal article" date="1998" name="Hum. Mol. Genet.">
        <title>Ataxin-3 is transported into the nucleus and associates with the nuclear matrix.</title>
        <authorList>
            <person name="Tait D."/>
            <person name="Riccio M."/>
            <person name="Sittler A."/>
            <person name="Scherzinger E."/>
            <person name="Santi S."/>
            <person name="Ognibene A."/>
            <person name="Maraldi N.M."/>
            <person name="Lehrach H."/>
            <person name="Wanker E.E."/>
        </authorList>
    </citation>
    <scope>SUBCELLULAR LOCATION</scope>
</reference>
<reference key="9">
    <citation type="journal article" date="2002" name="J. Biol. Chem.">
        <title>Ataxin-3 is a histone-binding protein with two independent transcriptional corepressor activities.</title>
        <authorList>
            <person name="Li F."/>
            <person name="Macfarlan T."/>
            <person name="Pittman R.N."/>
            <person name="Chakravarti D."/>
        </authorList>
    </citation>
    <scope>FUNCTION</scope>
</reference>
<reference key="10">
    <citation type="journal article" date="2007" name="Biol. Chem.">
        <title>Josephin domain-containing proteins from a variety of species are active de-ubiquitination enzymes.</title>
        <authorList>
            <person name="Tzvetkov N."/>
            <person name="Breuer P."/>
        </authorList>
    </citation>
    <scope>CATALYTIC ACTIVITY</scope>
    <scope>FUNCTION</scope>
</reference>
<reference key="11">
    <citation type="journal article" date="2011" name="BMC Syst. Biol.">
        <title>Initial characterization of the human central proteome.</title>
        <authorList>
            <person name="Burkard T.R."/>
            <person name="Planyavsky M."/>
            <person name="Kaupe I."/>
            <person name="Breitwieser F.P."/>
            <person name="Buerckstuemmer T."/>
            <person name="Bennett K.L."/>
            <person name="Superti-Furga G."/>
            <person name="Colinge J."/>
        </authorList>
    </citation>
    <scope>IDENTIFICATION BY MASS SPECTROMETRY [LARGE SCALE ANALYSIS]</scope>
</reference>
<reference key="12">
    <citation type="journal article" date="2013" name="J. Biol. Chem.">
        <title>JosD1, a membrane-targeted deubiquitinating enzyme, is activated by ubiquitination and regulates membrane dynamics, cell motility, and endocytosis.</title>
        <authorList>
            <person name="Seki T."/>
            <person name="Gong L."/>
            <person name="Williams A.J."/>
            <person name="Sakai N."/>
            <person name="Todi S.V."/>
            <person name="Paulson H.L."/>
        </authorList>
    </citation>
    <scope>FUNCTION</scope>
    <scope>MUTAGENESIS OF CYS-14</scope>
</reference>
<reference key="13">
    <citation type="journal article" date="2013" name="J. Biol. Chem.">
        <title>The ubiquitin-conjugating enzyme (E2) Ube2w ubiquitinates the N terminus of substrates.</title>
        <authorList>
            <person name="Scaglione K.M."/>
            <person name="Basrur V."/>
            <person name="Ashraf N.S."/>
            <person name="Konen J.R."/>
            <person name="Elenitoba-Johnson K.S."/>
            <person name="Todi S.V."/>
            <person name="Paulson H.L."/>
        </authorList>
    </citation>
    <scope>UBIQUITINATION AT MET-1 AND LYS-200</scope>
</reference>
<reference key="14">
    <citation type="journal article" date="2013" name="J. Proteome Res.">
        <title>Toward a comprehensive characterization of a human cancer cell phosphoproteome.</title>
        <authorList>
            <person name="Zhou H."/>
            <person name="Di Palma S."/>
            <person name="Preisinger C."/>
            <person name="Peng M."/>
            <person name="Polat A.N."/>
            <person name="Heck A.J."/>
            <person name="Mohammed S."/>
        </authorList>
    </citation>
    <scope>PHOSPHORYLATION [LARGE SCALE ANALYSIS] AT SER-265</scope>
    <scope>IDENTIFICATION BY MASS SPECTROMETRY [LARGE SCALE ANALYSIS]</scope>
    <source>
        <tissue>Cervix carcinoma</tissue>
        <tissue>Erythroleukemia</tissue>
    </source>
</reference>
<reference key="15">
    <citation type="journal article" date="2017" name="Nature">
        <title>Polyglutamine tracts regulate beclin 1-dependent autophagy.</title>
        <authorList>
            <person name="Ashkenazi A."/>
            <person name="Bento C.F."/>
            <person name="Ricketts T."/>
            <person name="Vicinanza M."/>
            <person name="Siddiqi F."/>
            <person name="Pavel M."/>
            <person name="Squitieri F."/>
            <person name="Hardenberg M.C."/>
            <person name="Imarisio S."/>
            <person name="Menzies F.M."/>
            <person name="Rubinsztein D.C."/>
        </authorList>
    </citation>
    <scope>INTERACTION WITH BECN1</scope>
    <scope>FUNCTION</scope>
    <scope>DOMAIN</scope>
</reference>
<reference key="16">
    <citation type="journal article" date="2019" name="J. Biol. Chem.">
        <title>Physiological and pathophysiological characteristics of ataxin-3 isoforms.</title>
        <authorList>
            <person name="Weishaeupl D."/>
            <person name="Schneider J."/>
            <person name="Peixoto Pinheiro B."/>
            <person name="Ruess C."/>
            <person name="Dold S.M."/>
            <person name="von Zweydorf F."/>
            <person name="Gloeckner C.J."/>
            <person name="Schmidt J."/>
            <person name="Riess O."/>
            <person name="Schmidt T."/>
        </authorList>
    </citation>
    <scope>SUBCELLULAR LOCATION</scope>
    <scope>INTERACTION WITH CASP7; PRKN; UBR2; VCP; RAD23A AND RAD23B</scope>
    <scope>INTERACTION WITH TUBULIN</scope>
    <scope>CHARACTERIZATION OF VARIANT 349-TYR--LEU-364 DEL (ISOFORM 1)</scope>
</reference>
<reference key="17">
    <citation type="journal article" date="2020" name="Mol. Cell">
        <title>Amino acids enhance polyubiquitination of Rheb and its binding to mTORC1 by blocking lysosomal ATXN3 deubiquitinase activity.</title>
        <authorList>
            <person name="Yao Y."/>
            <person name="Hong S."/>
            <person name="Ikeda T."/>
            <person name="Mori H."/>
            <person name="MacDougald O.A."/>
            <person name="Nada S."/>
            <person name="Okada M."/>
            <person name="Inoki K."/>
        </authorList>
    </citation>
    <scope>FUNCTION</scope>
    <scope>CATALYTIC ACTIVITY</scope>
    <scope>SUBCELLULAR LOCATION</scope>
    <scope>ACTIVE SITE</scope>
    <scope>MUTAGENESIS OF CYS-14</scope>
</reference>
<reference key="18">
    <citation type="journal article" date="2003" name="Proteins">
        <title>Structural modeling of ataxin-3 reveals distant homology to adaptins.</title>
        <authorList>
            <person name="Albrecht M."/>
            <person name="Hoffmann D."/>
            <person name="Evert B.O."/>
            <person name="Schmitt I."/>
            <person name="Wuellner U."/>
            <person name="Lengauer T."/>
        </authorList>
    </citation>
    <scope>3D-STRUCTURE MODELING</scope>
</reference>
<reference key="19">
    <citation type="journal article" date="2005" name="Proc. Natl. Acad. Sci. U.S.A.">
        <title>The solution structure of the Josephin domain of ataxin-3: structural determinants for molecular recognition.</title>
        <authorList>
            <person name="Nicastro G."/>
            <person name="Menon R.P."/>
            <person name="Masino L."/>
            <person name="Knowles P.P."/>
            <person name="McDonald N.Q."/>
            <person name="Pastore A."/>
        </authorList>
    </citation>
    <scope>STRUCTURE BY NMR OF 1-182</scope>
    <scope>INTERACTION WITH RAD23A AND RAD23B</scope>
</reference>
<reference key="20">
    <citation type="journal article" date="2005" name="Proc. Natl. Acad. Sci. U.S.A.">
        <title>Deubiquitinating function of ataxin-3: insights from the solution structure of the Josephin domain.</title>
        <authorList>
            <person name="Mao Y."/>
            <person name="Senic-Matuglia F."/>
            <person name="Di Fiore P.P."/>
            <person name="Polo S."/>
            <person name="Hodsdon M.E."/>
            <person name="De Camilli P."/>
        </authorList>
    </citation>
    <scope>STRUCTURE BY NMR OF 1-185</scope>
    <scope>FUNCTION</scope>
    <scope>MUTAGENESIS OF CYS-14; SER-236; SER-256 AND SER-335</scope>
</reference>
<protein>
    <recommendedName>
        <fullName>Ataxin-3</fullName>
        <ecNumber evidence="10 15">3.4.19.12</ecNumber>
    </recommendedName>
    <alternativeName>
        <fullName>Machado-Joseph disease protein 1</fullName>
    </alternativeName>
    <alternativeName>
        <fullName>Spinocerebellar ataxia type 3 protein</fullName>
    </alternativeName>
</protein>
<evidence type="ECO:0000250" key="1">
    <source>
        <dbReference type="UniProtKB" id="Q9CVD2"/>
    </source>
</evidence>
<evidence type="ECO:0000255" key="2">
    <source>
        <dbReference type="PROSITE-ProRule" id="PRU00213"/>
    </source>
</evidence>
<evidence type="ECO:0000255" key="3">
    <source>
        <dbReference type="PROSITE-ProRule" id="PRU00331"/>
    </source>
</evidence>
<evidence type="ECO:0000256" key="4">
    <source>
        <dbReference type="SAM" id="MobiDB-lite"/>
    </source>
</evidence>
<evidence type="ECO:0000269" key="5">
    <source>
    </source>
</evidence>
<evidence type="ECO:0000269" key="6">
    <source>
    </source>
</evidence>
<evidence type="ECO:0000269" key="7">
    <source>
    </source>
</evidence>
<evidence type="ECO:0000269" key="8">
    <source>
    </source>
</evidence>
<evidence type="ECO:0000269" key="9">
    <source>
    </source>
</evidence>
<evidence type="ECO:0000269" key="10">
    <source>
    </source>
</evidence>
<evidence type="ECO:0000269" key="11">
    <source>
    </source>
</evidence>
<evidence type="ECO:0000269" key="12">
    <source>
    </source>
</evidence>
<evidence type="ECO:0000269" key="13">
    <source>
    </source>
</evidence>
<evidence type="ECO:0000269" key="14">
    <source>
    </source>
</evidence>
<evidence type="ECO:0000269" key="15">
    <source>
    </source>
</evidence>
<evidence type="ECO:0000269" key="16">
    <source>
    </source>
</evidence>
<evidence type="ECO:0000269" key="17">
    <source>
    </source>
</evidence>
<evidence type="ECO:0000269" key="18">
    <source>
    </source>
</evidence>
<evidence type="ECO:0000269" key="19">
    <source ref="4"/>
</evidence>
<evidence type="ECO:0000303" key="20">
    <source>
    </source>
</evidence>
<evidence type="ECO:0000303" key="21">
    <source>
    </source>
</evidence>
<evidence type="ECO:0000303" key="22">
    <source>
    </source>
</evidence>
<evidence type="ECO:0000305" key="23"/>
<evidence type="ECO:0000305" key="24">
    <source>
    </source>
</evidence>
<evidence type="ECO:0000305" key="25">
    <source>
    </source>
</evidence>
<evidence type="ECO:0000305" key="26">
    <source>
    </source>
</evidence>
<evidence type="ECO:0000312" key="27">
    <source>
        <dbReference type="HGNC" id="HGNC:7106"/>
    </source>
</evidence>
<evidence type="ECO:0007744" key="28">
    <source>
    </source>
</evidence>
<evidence type="ECO:0007829" key="29">
    <source>
        <dbReference type="PDB" id="1YZB"/>
    </source>
</evidence>
<evidence type="ECO:0007829" key="30">
    <source>
        <dbReference type="PDB" id="2AGA"/>
    </source>
</evidence>
<evidence type="ECO:0007829" key="31">
    <source>
        <dbReference type="PDB" id="2JRI"/>
    </source>
</evidence>
<evidence type="ECO:0007829" key="32">
    <source>
        <dbReference type="PDB" id="2KLZ"/>
    </source>
</evidence>
<evidence type="ECO:0007829" key="33">
    <source>
        <dbReference type="PDB" id="4YS9"/>
    </source>
</evidence>
<proteinExistence type="evidence at protein level"/>
<name>ATX3_HUMAN</name>